<name>CAPS1_RAT</name>
<keyword id="KW-0002">3D-structure</keyword>
<keyword id="KW-0106">Calcium</keyword>
<keyword id="KW-0968">Cytoplasmic vesicle</keyword>
<keyword id="KW-0903">Direct protein sequencing</keyword>
<keyword id="KW-0268">Exocytosis</keyword>
<keyword id="KW-0446">Lipid-binding</keyword>
<keyword id="KW-0472">Membrane</keyword>
<keyword id="KW-0479">Metal-binding</keyword>
<keyword id="KW-0597">Phosphoprotein</keyword>
<keyword id="KW-0653">Protein transport</keyword>
<keyword id="KW-1185">Reference proteome</keyword>
<keyword id="KW-0770">Synapse</keyword>
<keyword id="KW-0813">Transport</keyword>
<organism>
    <name type="scientific">Rattus norvegicus</name>
    <name type="common">Rat</name>
    <dbReference type="NCBI Taxonomy" id="10116"/>
    <lineage>
        <taxon>Eukaryota</taxon>
        <taxon>Metazoa</taxon>
        <taxon>Chordata</taxon>
        <taxon>Craniata</taxon>
        <taxon>Vertebrata</taxon>
        <taxon>Euteleostomi</taxon>
        <taxon>Mammalia</taxon>
        <taxon>Eutheria</taxon>
        <taxon>Euarchontoglires</taxon>
        <taxon>Glires</taxon>
        <taxon>Rodentia</taxon>
        <taxon>Myomorpha</taxon>
        <taxon>Muroidea</taxon>
        <taxon>Muridae</taxon>
        <taxon>Murinae</taxon>
        <taxon>Rattus</taxon>
    </lineage>
</organism>
<protein>
    <recommendedName>
        <fullName>Calcium-dependent secretion activator 1</fullName>
    </recommendedName>
    <alternativeName>
        <fullName>Calcium-dependent activator protein for secretion 1</fullName>
        <shortName>CAPS-1</shortName>
        <shortName>rCAPS</shortName>
    </alternativeName>
</protein>
<evidence type="ECO:0000250" key="1"/>
<evidence type="ECO:0000250" key="2">
    <source>
        <dbReference type="UniProtKB" id="Q80TJ1"/>
    </source>
</evidence>
<evidence type="ECO:0000255" key="3">
    <source>
        <dbReference type="PROSITE-ProRule" id="PRU00041"/>
    </source>
</evidence>
<evidence type="ECO:0000255" key="4">
    <source>
        <dbReference type="PROSITE-ProRule" id="PRU00145"/>
    </source>
</evidence>
<evidence type="ECO:0000255" key="5">
    <source>
        <dbReference type="PROSITE-ProRule" id="PRU00587"/>
    </source>
</evidence>
<evidence type="ECO:0000256" key="6">
    <source>
        <dbReference type="SAM" id="MobiDB-lite"/>
    </source>
</evidence>
<evidence type="ECO:0000269" key="7">
    <source>
    </source>
</evidence>
<evidence type="ECO:0000269" key="8">
    <source>
    </source>
</evidence>
<evidence type="ECO:0000269" key="9">
    <source>
    </source>
</evidence>
<evidence type="ECO:0000269" key="10">
    <source>
    </source>
</evidence>
<evidence type="ECO:0000269" key="11">
    <source>
    </source>
</evidence>
<evidence type="ECO:0000269" key="12">
    <source>
    </source>
</evidence>
<evidence type="ECO:0000269" key="13">
    <source>
    </source>
</evidence>
<evidence type="ECO:0000269" key="14">
    <source>
    </source>
</evidence>
<evidence type="ECO:0000269" key="15">
    <source>
    </source>
</evidence>
<evidence type="ECO:0000305" key="16"/>
<evidence type="ECO:0007744" key="17">
    <source>
    </source>
</evidence>
<evidence type="ECO:0007829" key="18">
    <source>
        <dbReference type="PDB" id="6A68"/>
    </source>
</evidence>
<evidence type="ECO:0007829" key="19">
    <source>
        <dbReference type="PDB" id="7VS3"/>
    </source>
</evidence>
<feature type="chain" id="PRO_0000053866" description="Calcium-dependent secretion activator 1">
    <location>
        <begin position="1"/>
        <end position="1289"/>
    </location>
</feature>
<feature type="domain" description="C2" evidence="3">
    <location>
        <begin position="378"/>
        <end position="493"/>
    </location>
</feature>
<feature type="domain" description="PH" evidence="4">
    <location>
        <begin position="519"/>
        <end position="622"/>
    </location>
</feature>
<feature type="domain" description="MHD1" evidence="5">
    <location>
        <begin position="916"/>
        <end position="1047"/>
    </location>
</feature>
<feature type="region of interest" description="Disordered" evidence="6">
    <location>
        <begin position="1"/>
        <end position="107"/>
    </location>
</feature>
<feature type="region of interest" description="Interaction with DRD2" evidence="1">
    <location>
        <begin position="788"/>
        <end position="1065"/>
    </location>
</feature>
<feature type="region of interest" description="Mediates targeting and association with DCVs">
    <location>
        <begin position="1113"/>
        <end position="1289"/>
    </location>
</feature>
<feature type="region of interest" description="Disordered" evidence="6">
    <location>
        <begin position="1264"/>
        <end position="1289"/>
    </location>
</feature>
<feature type="compositionally biased region" description="Acidic residues" evidence="6">
    <location>
        <begin position="1"/>
        <end position="19"/>
    </location>
</feature>
<feature type="compositionally biased region" description="Gly residues" evidence="6">
    <location>
        <begin position="44"/>
        <end position="75"/>
    </location>
</feature>
<feature type="compositionally biased region" description="Basic and acidic residues" evidence="6">
    <location>
        <begin position="96"/>
        <end position="107"/>
    </location>
</feature>
<feature type="modified residue" description="Phosphoserine" evidence="2">
    <location>
        <position position="34"/>
    </location>
</feature>
<feature type="modified residue" description="Phosphoserine" evidence="17">
    <location>
        <position position="89"/>
    </location>
</feature>
<feature type="modified residue" description="Phosphoserine" evidence="17">
    <location>
        <position position="96"/>
    </location>
</feature>
<feature type="modified residue" description="Phosphoserine" evidence="17">
    <location>
        <position position="259"/>
    </location>
</feature>
<feature type="mutagenesis site" description="Loss of function." evidence="11">
    <original>G</original>
    <variation>E</variation>
    <location>
        <position position="476"/>
    </location>
</feature>
<feature type="mutagenesis site" description="No effect." evidence="8">
    <original>K</original>
    <variation>E</variation>
    <location>
        <position position="531"/>
    </location>
</feature>
<feature type="mutagenesis site" description="Affects PtdIns(4,5)P2-binding, plasma membrane-association but not binding to DCVs." evidence="8">
    <original>WKKR</original>
    <variation>SQKE</variation>
    <location>
        <begin position="537"/>
        <end position="540"/>
    </location>
</feature>
<feature type="mutagenesis site" description="Affects PtdIns(4,5)P2-binding, plasma membrane-association but not binding to DCVs." evidence="8">
    <original>REKK</original>
    <variation>DEEE</variation>
    <location>
        <begin position="558"/>
        <end position="561"/>
    </location>
</feature>
<feature type="mutagenesis site" description="Affects PtdIns(4,5)P2-binding, plasma membrane-association but not binding to DCVs." evidence="8">
    <original>K</original>
    <variation>E</variation>
    <location>
        <position position="561"/>
    </location>
</feature>
<feature type="strand" evidence="19">
    <location>
        <begin position="396"/>
        <end position="406"/>
    </location>
</feature>
<feature type="strand" evidence="19">
    <location>
        <begin position="416"/>
        <end position="423"/>
    </location>
</feature>
<feature type="strand" evidence="19">
    <location>
        <begin position="428"/>
        <end position="430"/>
    </location>
</feature>
<feature type="strand" evidence="19">
    <location>
        <begin position="440"/>
        <end position="450"/>
    </location>
</feature>
<feature type="strand" evidence="19">
    <location>
        <begin position="456"/>
        <end position="463"/>
    </location>
</feature>
<feature type="strand" evidence="19">
    <location>
        <begin position="472"/>
        <end position="480"/>
    </location>
</feature>
<feature type="strand" evidence="19">
    <location>
        <begin position="491"/>
        <end position="494"/>
    </location>
</feature>
<feature type="strand" evidence="19">
    <location>
        <begin position="499"/>
        <end position="502"/>
    </location>
</feature>
<feature type="strand" evidence="19">
    <location>
        <begin position="507"/>
        <end position="514"/>
    </location>
</feature>
<feature type="strand" evidence="19">
    <location>
        <begin position="520"/>
        <end position="534"/>
    </location>
</feature>
<feature type="strand" evidence="19">
    <location>
        <begin position="538"/>
        <end position="546"/>
    </location>
</feature>
<feature type="strand" evidence="19">
    <location>
        <begin position="548"/>
        <end position="550"/>
    </location>
</feature>
<feature type="strand" evidence="19">
    <location>
        <begin position="552"/>
        <end position="557"/>
    </location>
</feature>
<feature type="strand" evidence="19">
    <location>
        <begin position="565"/>
        <end position="569"/>
    </location>
</feature>
<feature type="strand" evidence="19">
    <location>
        <begin position="574"/>
        <end position="577"/>
    </location>
</feature>
<feature type="strand" evidence="19">
    <location>
        <begin position="588"/>
        <end position="595"/>
    </location>
</feature>
<feature type="strand" evidence="19">
    <location>
        <begin position="598"/>
        <end position="606"/>
    </location>
</feature>
<feature type="helix" evidence="19">
    <location>
        <begin position="607"/>
        <end position="621"/>
    </location>
</feature>
<feature type="helix" evidence="18">
    <location>
        <begin position="869"/>
        <end position="921"/>
    </location>
</feature>
<feature type="helix" evidence="18">
    <location>
        <begin position="933"/>
        <end position="944"/>
    </location>
</feature>
<feature type="turn" evidence="18">
    <location>
        <begin position="947"/>
        <end position="951"/>
    </location>
</feature>
<feature type="helix" evidence="18">
    <location>
        <begin position="953"/>
        <end position="981"/>
    </location>
</feature>
<feature type="helix" evidence="18">
    <location>
        <begin position="982"/>
        <end position="984"/>
    </location>
</feature>
<feature type="helix" evidence="18">
    <location>
        <begin position="1001"/>
        <end position="1015"/>
    </location>
</feature>
<proteinExistence type="evidence at protein level"/>
<reference key="1">
    <citation type="journal article" date="1997" name="J. Biol. Chem.">
        <title>Novel Ca2+-binding protein (CAPS) related to UNC-31 required for Ca2+-activated exocytosis.</title>
        <authorList>
            <person name="Ann K."/>
            <person name="Kowalchyk J.A."/>
            <person name="Loyet K.M."/>
            <person name="Martin T.F.J."/>
        </authorList>
    </citation>
    <scope>NUCLEOTIDE SEQUENCE [MRNA]</scope>
    <scope>PROTEIN SEQUENCE OF 103-109; 560-595; 810-821 AND 1155-1183</scope>
    <scope>CALCIUM-BINDING</scope>
    <scope>TISSUE SPECIFICITY</scope>
</reference>
<reference key="2">
    <citation type="journal article" date="1992" name="Cell">
        <title>A novel 145 kd brain cytosolic protein reconstitutes Ca(2+)-regulated secretion in permeable neuroendocrine cells.</title>
        <authorList>
            <person name="Walent J.H."/>
            <person name="Porter B.W."/>
            <person name="Martin T.F.J."/>
        </authorList>
    </citation>
    <scope>FUNCTION</scope>
    <scope>SUBCELLULAR LOCATION</scope>
    <scope>SUBUNIT</scope>
</reference>
<reference key="3">
    <citation type="journal article" date="1997" name="J. Biol. Chem.">
        <title>Docked secretory vesicles undergo Ca2+-activated exocytosis in a cell-free system.</title>
        <authorList>
            <person name="Martin T.F.J."/>
            <person name="Kowalchyk J.A."/>
        </authorList>
    </citation>
    <scope>FUNCTION</scope>
</reference>
<reference key="4">
    <citation type="journal article" date="1998" name="J. Biol. Chem.">
        <title>Specific binding of phosphatidylinositol 4,5-bisphosphate to calcium-dependent activator protein for secretion (CAPS), a potential phosphoinositide effector protein for regulated exocytosis.</title>
        <authorList>
            <person name="Loyet K.M."/>
            <person name="Kowalchyk J.A."/>
            <person name="Chaudhary A."/>
            <person name="Chen J."/>
            <person name="Prestwich G.D."/>
            <person name="Martin T.F.J."/>
        </authorList>
    </citation>
    <scope>PHOSPHOINOSIDE-BINDING</scope>
</reference>
<reference key="5">
    <citation type="journal article" date="1998" name="Neuron">
        <title>CAPS (mammalian UNC-31) protein localizes to membranes involved in dense-core vesicle exocytosis.</title>
        <authorList>
            <person name="Berwin B."/>
            <person name="Floor E."/>
            <person name="Martin T.F.J."/>
        </authorList>
    </citation>
    <scope>FUNCTION</scope>
    <scope>SUBCELLULAR LOCATION</scope>
    <scope>TISSUE SPECIFICITY</scope>
</reference>
<reference key="6">
    <citation type="journal article" date="1998" name="Neuron">
        <title>Differential regulation of exocytosis by calcium and CAPS in semi-intact synaptosomes.</title>
        <authorList>
            <person name="Tandon A."/>
            <person name="Bannykh S."/>
            <person name="Kowalchyk J.A."/>
            <person name="Banerjee A."/>
            <person name="Martin T.F.J."/>
            <person name="Balch W.E."/>
        </authorList>
    </citation>
    <scope>FUNCTION</scope>
</reference>
<reference key="7">
    <citation type="journal article" date="2000" name="Proc. Natl. Acad. Sci. U.S.A.">
        <title>Rapid regulated dense-core vesicle exocytosis requires the CAPS protein.</title>
        <authorList>
            <person name="Rupnik M."/>
            <person name="Kreft M."/>
            <person name="Sikdar S.K."/>
            <person name="Grilc S."/>
            <person name="Romih R."/>
            <person name="Zupancic G."/>
            <person name="Martin T.F.J."/>
            <person name="Zorec R."/>
        </authorList>
    </citation>
    <scope>FUNCTION</scope>
    <scope>SUBCELLULAR LOCATION</scope>
</reference>
<reference key="8">
    <citation type="journal article" date="2002" name="J. Biol. Chem.">
        <title>Membrane association domains in Ca2+-dependent activator protein for secretion mediate plasma membrane and dense-core vesicle binding required for Ca2+-dependent exocytosis.</title>
        <authorList>
            <person name="Grishanin R.N."/>
            <person name="Klenchin V.A."/>
            <person name="Loyet K.M."/>
            <person name="Kowalchyk J.A."/>
            <person name="Ann K."/>
            <person name="Martin T.F.J."/>
        </authorList>
    </citation>
    <scope>SUBCELLULAR LOCATION</scope>
    <scope>DOMAIN</scope>
    <scope>PHOSPHOINOSIDE-BINDING</scope>
    <scope>MUTAGENESIS OF LYS-531; 537-TRP--ARG-540; 558-ARG--LYS-561 AND LYS-561</scope>
</reference>
<reference key="9">
    <citation type="journal article" date="2003" name="J. Biol. Chem.">
        <title>A family of Ca2+-dependent activator proteins for secretion: comparative analysis of structure, expression, localization, and function.</title>
        <authorList>
            <person name="Speidel D."/>
            <person name="Varoqueaux F."/>
            <person name="Enk C."/>
            <person name="Nojiri M."/>
            <person name="Grishanin R.N."/>
            <person name="Martin T.F.J."/>
            <person name="Hofmann K."/>
            <person name="Brose N."/>
            <person name="Reim K."/>
        </authorList>
    </citation>
    <scope>SUBCELLULAR LOCATION</scope>
    <scope>TISSUE SPECIFICITY</scope>
</reference>
<reference key="10">
    <citation type="journal article" date="2004" name="Neuron">
        <title>CAPS acts at a prefusion step in dense-core vesicle exocytosis as a PIP2 binding protein.</title>
        <authorList>
            <person name="Grishanin R.N."/>
            <person name="Kowalchyk J.A."/>
            <person name="Klenchin V.A."/>
            <person name="Ann K."/>
            <person name="Earles C.A."/>
            <person name="Chapman E.R."/>
            <person name="Gerona R.R.L."/>
            <person name="Martin T.F.J."/>
        </authorList>
    </citation>
    <scope>FUNCTION</scope>
    <scope>MUTAGENESIS OF GLY-476</scope>
</reference>
<reference key="11">
    <citation type="journal article" date="2012" name="Nat. Commun.">
        <title>Quantitative maps of protein phosphorylation sites across 14 different rat organs and tissues.</title>
        <authorList>
            <person name="Lundby A."/>
            <person name="Secher A."/>
            <person name="Lage K."/>
            <person name="Nordsborg N.B."/>
            <person name="Dmytriyev A."/>
            <person name="Lundby C."/>
            <person name="Olsen J.V."/>
        </authorList>
    </citation>
    <scope>PHOSPHORYLATION [LARGE SCALE ANALYSIS] AT SER-89; SER-96 AND SER-259</scope>
    <scope>IDENTIFICATION BY MASS SPECTROMETRY [LARGE SCALE ANALYSIS]</scope>
</reference>
<comment type="function">
    <text evidence="7 10 11 12 14 15">Calcium-binding protein involved in exocytosis of vesicles filled with neurotransmitters and neuropeptides. Probably acts upstream of fusion in the biogenesis or maintenance of mature secretory vesicles. Regulates catecholamine loading of DCVs. May specifically mediate the Ca(2+)-dependent exocytosis of large dense-core vesicles (DCVs) and other dense-core vesicles by acting as a PtdIns(4,5)P2-binding protein that acts at prefusion step following ATP-dependent priming and participates in DCVs-membrane fusion. However, it may also participate in small clear synaptic vesicles (SVs) exocytosis and it is unclear whether its function is related to Ca(2+) triggering.</text>
</comment>
<comment type="subunit">
    <text evidence="1 10">Interacts with the dopamine receptor DRD2 (By similarity). Interacts with RASL10B (By similarity). Homodimer.</text>
</comment>
<comment type="interaction">
    <interactant intactId="EBI-15804323">
        <id>Q62717</id>
    </interactant>
    <interactant intactId="EBI-539720">
        <id>P32851</id>
        <label>Stx1a</label>
    </interactant>
    <organismsDiffer>false</organismsDiffer>
    <experiments>3</experiments>
</comment>
<comment type="subcellular location">
    <subcellularLocation>
        <location evidence="7 8 9 10 14">Synapse</location>
    </subcellularLocation>
    <subcellularLocation>
        <location evidence="7 8 14">Cytoplasmic vesicle</location>
        <location evidence="7 8 14">Secretory vesicle</location>
        <location evidence="7 8 14">Neuronal dense core vesicle membrane</location>
        <topology evidence="16">Peripheral membrane protein</topology>
    </subcellularLocation>
    <text evidence="7 8 9 10 14">Membrane-associated to vesicles. Strongly enriched in synaptic fractions. Preferentially binds to dense core vesicles but not to synaptic vesicles. Binds phosphoinosides, with a strong selectivity for PtdIns(4,5)P2 over PtdIns(3,4,5)P3. Probably localizes to different vesicles compared to CADPS2.</text>
</comment>
<comment type="tissue specificity">
    <text evidence="9 13 14">Specifically expressed in neural and endocrine secretory tissues. Expressed in brain, pancreas, hypothalamus, pituitary and adrenal but not in heart, placenta, lung, liver, skeletal muscle or kidney. In brain, it is absent from the cell body layers of the hippocampus and dentate gyrus but abundant in the synaptic neuropil, except for the stratum lucidum and stratum lacunosum moleculare where it is not detected. In the cerebellum, it is mainly detected in the glomeruli of the granule cell layer where it colocalized with synaptophysin. In the olfactory bulb, it is detected mainly in the glomeruli. In the adult adrenal gland, where it is restricted to the medulla (at protein level).</text>
</comment>
<comment type="domain">
    <text evidence="8">The PH domain is essential for regulated exocytosis and binds phospholipids and plasma membrane. It however does not mediate binding to DCVs.</text>
</comment>
<gene>
    <name type="primary">Cadps</name>
    <name type="synonym">Caps</name>
    <name type="synonym">Caps1</name>
</gene>
<sequence length="1289" mass="146266">MLDPSSSEEESDEILEEESGKEVLGSAASGARLSPSRTNEGSAGSAGMGGSGAGAGVGAGGGGGSGASSGGGAGGLQPSSRAGGGRPSSPSPSVVSEKEKEELERLQKEEEERKKRLQLYVFVMRCIAYPFNAKQPTDMARRPRKISKQQLQTVKDRFQAFLNGETQIVADEAFMNAVQSYYEVFLKSDRVARMVQSGGCSANDSREVFKKHIEKRVRSLPEIDGLSKETVLSSWMAKFDAIYRGEEDPRKQQARMTASAASELILSKEQLYEMFQNILGIKKFEHQLLYNACQLDNPDEQAAQIRRELDGRLQMADQIARERKFPKFVSKEMENMYIEELKSSVNLLMANLESMPVSKGGEFKLQKLKRSHNASIIDMGEESENQLSKSDVLLSFSLEVVIMEVQGLKSLAPNRIVYCTMEVEGGEKLQTDQAEASKPTWGTQGDFSTTHALPAVKVKLFTESTGVLALEDKELGRVILHPTPNSPKQSEWHKMTVSKNCPDQDLKIKLAVRMDKPQNMKHSGYLWTIGKNVWKRWKKRFFVLVQVSQYTFAMCSYREKKAEPQELLQLDGYTVDYTDPQPGLEGGRAFFNAVKEGDTVIFASDDEQDRILWVQAMYRATGQSHKPVPPTQVQKLKPRAETCLSMDAPISQFYADRAQKHGMDEFISSNPCNFDHASLFEMVQRLTLDHRLNDSYSCLGWFSPGQVFVLDEYCARNGVRGCHRHLCYLRDLLERAENGAMIDPTLLHYSFAFCASHVHGNRPDGIGTVTVEEKERFEEIKERLRVLLENQITHFRYCFPFGRPEGALKATLSLLERVLMKDIVTPVPQEEVKTVIRKCLEQAALVNYSRLSEYAKIEENVGRLITPAKKLEDTIRLAELVIEVLQQNEEHHAEAFAWWSDLMVEHAETFLSLFAVDMDAALEVQPPDTWDSFPLFQLLNDFLRTDYNLCNGKFHKHLQDLFAPLVVRYVDLMESSIAQSIHRGFERESWEPVNNGSGTSEDLFWKLDALQTFIRDLHWPEEEFGKHLEQRLKLMASDMIESCVKRTRIAFEVKLQKTSRSTDFRVPQSICTMFNVMVDAKAQSTKLCSMEMGQEHQYHSKIDELIEETVKEMITLLVAKFVTILEGVLAKLSRYDEGTLFSSFLSFTVKAASKYVDVPKPGMDVADAYVTFVRHSQDVLRDKVNEEMYIERLFDQWYNSSMNVICTWLTDRMDLQLHIYQLKTLIRMVKKTYRDFRLQGVLDSTLNSKTYETIRNRLTVEERTASVSEGGGLQGISMKDSDEEDEEDD</sequence>
<dbReference type="EMBL" id="U16802">
    <property type="protein sequence ID" value="AAB88635.1"/>
    <property type="molecule type" value="mRNA"/>
</dbReference>
<dbReference type="PIR" id="I84505">
    <property type="entry name" value="I84505"/>
</dbReference>
<dbReference type="RefSeq" id="NP_037351.1">
    <property type="nucleotide sequence ID" value="NM_013219.1"/>
</dbReference>
<dbReference type="PDB" id="6A68">
    <property type="method" value="X-ray"/>
    <property type="resolution" value="2.90 A"/>
    <property type="chains" value="A=859-1036"/>
</dbReference>
<dbReference type="PDB" id="7VS3">
    <property type="method" value="X-ray"/>
    <property type="resolution" value="2.60 A"/>
    <property type="chains" value="A=391-634"/>
</dbReference>
<dbReference type="PDBsum" id="6A68"/>
<dbReference type="PDBsum" id="7VS3"/>
<dbReference type="SMR" id="Q62717"/>
<dbReference type="BioGRID" id="247806">
    <property type="interactions" value="5"/>
</dbReference>
<dbReference type="DIP" id="DIP-58640N"/>
<dbReference type="FunCoup" id="Q62717">
    <property type="interactions" value="1350"/>
</dbReference>
<dbReference type="IntAct" id="Q62717">
    <property type="interactions" value="3"/>
</dbReference>
<dbReference type="MINT" id="Q62717"/>
<dbReference type="STRING" id="10116.ENSRNOP00000012153"/>
<dbReference type="GlyGen" id="Q62717">
    <property type="glycosylation" value="1 site, 1 O-linked glycan (1 site)"/>
</dbReference>
<dbReference type="iPTMnet" id="Q62717"/>
<dbReference type="PhosphoSitePlus" id="Q62717"/>
<dbReference type="jPOST" id="Q62717"/>
<dbReference type="PaxDb" id="10116-ENSRNOP00000012153"/>
<dbReference type="GeneID" id="26989"/>
<dbReference type="KEGG" id="rno:26989"/>
<dbReference type="AGR" id="RGD:708573"/>
<dbReference type="CTD" id="8618"/>
<dbReference type="RGD" id="708573">
    <property type="gene designation" value="Cadps"/>
</dbReference>
<dbReference type="eggNOG" id="KOG3543">
    <property type="taxonomic scope" value="Eukaryota"/>
</dbReference>
<dbReference type="InParanoid" id="Q62717"/>
<dbReference type="PRO" id="PR:Q62717"/>
<dbReference type="Proteomes" id="UP000002494">
    <property type="component" value="Unplaced"/>
</dbReference>
<dbReference type="GO" id="GO:0031410">
    <property type="term" value="C:cytoplasmic vesicle"/>
    <property type="evidence" value="ECO:0000266"/>
    <property type="project" value="RGD"/>
</dbReference>
<dbReference type="GO" id="GO:0031045">
    <property type="term" value="C:dense core granule"/>
    <property type="evidence" value="ECO:0000314"/>
    <property type="project" value="ParkinsonsUK-UCL"/>
</dbReference>
<dbReference type="GO" id="GO:0098674">
    <property type="term" value="C:extrinsic component of neuronal dense core vesicle membrane"/>
    <property type="evidence" value="ECO:0000314"/>
    <property type="project" value="SynGO"/>
</dbReference>
<dbReference type="GO" id="GO:0098978">
    <property type="term" value="C:glutamatergic synapse"/>
    <property type="evidence" value="ECO:0000314"/>
    <property type="project" value="SynGO"/>
</dbReference>
<dbReference type="GO" id="GO:0098793">
    <property type="term" value="C:presynapse"/>
    <property type="evidence" value="ECO:0000314"/>
    <property type="project" value="SynGO"/>
</dbReference>
<dbReference type="GO" id="GO:0005509">
    <property type="term" value="F:calcium ion binding"/>
    <property type="evidence" value="ECO:0000314"/>
    <property type="project" value="RGD"/>
</dbReference>
<dbReference type="GO" id="GO:0005546">
    <property type="term" value="F:phosphatidylinositol-4,5-bisphosphate binding"/>
    <property type="evidence" value="ECO:0000314"/>
    <property type="project" value="WormBase"/>
</dbReference>
<dbReference type="GO" id="GO:0019901">
    <property type="term" value="F:protein kinase binding"/>
    <property type="evidence" value="ECO:0000266"/>
    <property type="project" value="RGD"/>
</dbReference>
<dbReference type="GO" id="GO:0050432">
    <property type="term" value="P:catecholamine secretion"/>
    <property type="evidence" value="ECO:0000266"/>
    <property type="project" value="RGD"/>
</dbReference>
<dbReference type="GO" id="GO:0051649">
    <property type="term" value="P:establishment of localization in cell"/>
    <property type="evidence" value="ECO:0000266"/>
    <property type="project" value="RGD"/>
</dbReference>
<dbReference type="GO" id="GO:0006887">
    <property type="term" value="P:exocytosis"/>
    <property type="evidence" value="ECO:0000318"/>
    <property type="project" value="GO_Central"/>
</dbReference>
<dbReference type="GO" id="GO:0045956">
    <property type="term" value="P:positive regulation of calcium ion-dependent exocytosis"/>
    <property type="evidence" value="ECO:0000315"/>
    <property type="project" value="RGD"/>
</dbReference>
<dbReference type="GO" id="GO:0045921">
    <property type="term" value="P:positive regulation of exocytosis"/>
    <property type="evidence" value="ECO:0000315"/>
    <property type="project" value="ParkinsonsUK-UCL"/>
</dbReference>
<dbReference type="GO" id="GO:0099525">
    <property type="term" value="P:presynaptic dense core vesicle exocytosis"/>
    <property type="evidence" value="ECO:0000266"/>
    <property type="project" value="RGD"/>
</dbReference>
<dbReference type="GO" id="GO:0015031">
    <property type="term" value="P:protein transport"/>
    <property type="evidence" value="ECO:0007669"/>
    <property type="project" value="UniProtKB-KW"/>
</dbReference>
<dbReference type="GO" id="GO:0045055">
    <property type="term" value="P:regulated exocytosis"/>
    <property type="evidence" value="ECO:0000304"/>
    <property type="project" value="RGD"/>
</dbReference>
<dbReference type="GO" id="GO:0016082">
    <property type="term" value="P:synaptic vesicle priming"/>
    <property type="evidence" value="ECO:0000266"/>
    <property type="project" value="RGD"/>
</dbReference>
<dbReference type="GO" id="GO:0016050">
    <property type="term" value="P:vesicle organization"/>
    <property type="evidence" value="ECO:0000266"/>
    <property type="project" value="RGD"/>
</dbReference>
<dbReference type="CDD" id="cd01234">
    <property type="entry name" value="PH_CADPS"/>
    <property type="match status" value="1"/>
</dbReference>
<dbReference type="FunFam" id="2.30.29.30:FF:000007">
    <property type="entry name" value="Calcium-dependent secretion activator 2 isoform B"/>
    <property type="match status" value="1"/>
</dbReference>
<dbReference type="FunFam" id="1.10.357.50:FF:000002">
    <property type="entry name" value="calcium-dependent secretion activator 2 isoform X7"/>
    <property type="match status" value="1"/>
</dbReference>
<dbReference type="Gene3D" id="1.10.357.50">
    <property type="match status" value="1"/>
</dbReference>
<dbReference type="Gene3D" id="2.30.29.30">
    <property type="entry name" value="Pleckstrin-homology domain (PH domain)/Phosphotyrosine-binding domain (PTB)"/>
    <property type="match status" value="1"/>
</dbReference>
<dbReference type="InterPro" id="IPR000008">
    <property type="entry name" value="C2_dom"/>
</dbReference>
<dbReference type="InterPro" id="IPR033227">
    <property type="entry name" value="CAPS"/>
</dbReference>
<dbReference type="InterPro" id="IPR010439">
    <property type="entry name" value="MUN_dom"/>
</dbReference>
<dbReference type="InterPro" id="IPR014770">
    <property type="entry name" value="Munc13_1"/>
</dbReference>
<dbReference type="InterPro" id="IPR011993">
    <property type="entry name" value="PH-like_dom_sf"/>
</dbReference>
<dbReference type="InterPro" id="IPR001849">
    <property type="entry name" value="PH_domain"/>
</dbReference>
<dbReference type="PANTHER" id="PTHR12166">
    <property type="entry name" value="CALCIUM-DEPENDENT SECRETION ACTIVATOR"/>
    <property type="match status" value="1"/>
</dbReference>
<dbReference type="PANTHER" id="PTHR12166:SF6">
    <property type="entry name" value="CALCIUM-DEPENDENT SECRETION ACTIVATOR 1"/>
    <property type="match status" value="1"/>
</dbReference>
<dbReference type="Pfam" id="PF25341">
    <property type="entry name" value="C2_CAPS"/>
    <property type="match status" value="1"/>
</dbReference>
<dbReference type="Pfam" id="PF06292">
    <property type="entry name" value="MUN"/>
    <property type="match status" value="1"/>
</dbReference>
<dbReference type="Pfam" id="PF00169">
    <property type="entry name" value="PH"/>
    <property type="match status" value="1"/>
</dbReference>
<dbReference type="SMART" id="SM01145">
    <property type="entry name" value="DUF1041"/>
    <property type="match status" value="1"/>
</dbReference>
<dbReference type="SMART" id="SM00233">
    <property type="entry name" value="PH"/>
    <property type="match status" value="1"/>
</dbReference>
<dbReference type="SUPFAM" id="SSF50729">
    <property type="entry name" value="PH domain-like"/>
    <property type="match status" value="1"/>
</dbReference>
<dbReference type="PROSITE" id="PS50004">
    <property type="entry name" value="C2"/>
    <property type="match status" value="1"/>
</dbReference>
<dbReference type="PROSITE" id="PS51258">
    <property type="entry name" value="MHD1"/>
    <property type="match status" value="1"/>
</dbReference>
<dbReference type="PROSITE" id="PS50003">
    <property type="entry name" value="PH_DOMAIN"/>
    <property type="match status" value="1"/>
</dbReference>
<accession>Q62717</accession>